<accession>A7GLN2</accession>
<feature type="chain" id="PRO_1000087575" description="UPF0342 protein Bcer98_0695">
    <location>
        <begin position="1"/>
        <end position="117"/>
    </location>
</feature>
<proteinExistence type="inferred from homology"/>
<sequence>MSKNIHDVAYGLQKAIADHTDFKTLKESYAKVQGDADSKQLFDTFRNMQLEIQQKMMQGQEITEEDNKKAQEVIDLIQQNEHIKKLMEAEQRLNVVIGDINKIIMKPLEELYSAYQA</sequence>
<gene>
    <name type="ordered locus">Bcer98_0695</name>
</gene>
<protein>
    <recommendedName>
        <fullName evidence="1">UPF0342 protein Bcer98_0695</fullName>
    </recommendedName>
</protein>
<dbReference type="EMBL" id="CP000764">
    <property type="protein sequence ID" value="ABS21040.1"/>
    <property type="molecule type" value="Genomic_DNA"/>
</dbReference>
<dbReference type="RefSeq" id="WP_011983796.1">
    <property type="nucleotide sequence ID" value="NC_009674.1"/>
</dbReference>
<dbReference type="SMR" id="A7GLN2"/>
<dbReference type="STRING" id="315749.Bcer98_0695"/>
<dbReference type="GeneID" id="33896073"/>
<dbReference type="KEGG" id="bcy:Bcer98_0695"/>
<dbReference type="eggNOG" id="COG3679">
    <property type="taxonomic scope" value="Bacteria"/>
</dbReference>
<dbReference type="HOGENOM" id="CLU_140243_3_0_9"/>
<dbReference type="OrthoDB" id="9811402at2"/>
<dbReference type="Proteomes" id="UP000002300">
    <property type="component" value="Chromosome"/>
</dbReference>
<dbReference type="Gene3D" id="1.20.1500.10">
    <property type="entry name" value="YheA/YmcA-like"/>
    <property type="match status" value="1"/>
</dbReference>
<dbReference type="HAMAP" id="MF_01526">
    <property type="entry name" value="UPF0342"/>
    <property type="match status" value="1"/>
</dbReference>
<dbReference type="InterPro" id="IPR010368">
    <property type="entry name" value="Com_YlbF"/>
</dbReference>
<dbReference type="InterPro" id="IPR023378">
    <property type="entry name" value="YheA/YmcA-like_dom_sf"/>
</dbReference>
<dbReference type="NCBIfam" id="NF010211">
    <property type="entry name" value="PRK13676.1-4"/>
    <property type="match status" value="1"/>
</dbReference>
<dbReference type="Pfam" id="PF06133">
    <property type="entry name" value="Com_YlbF"/>
    <property type="match status" value="1"/>
</dbReference>
<dbReference type="SUPFAM" id="SSF158622">
    <property type="entry name" value="YheA/YmcA-like"/>
    <property type="match status" value="1"/>
</dbReference>
<name>Y695_BACCN</name>
<evidence type="ECO:0000255" key="1">
    <source>
        <dbReference type="HAMAP-Rule" id="MF_01526"/>
    </source>
</evidence>
<comment type="similarity">
    <text evidence="1">Belongs to the UPF0342 family.</text>
</comment>
<reference key="1">
    <citation type="journal article" date="2008" name="Chem. Biol. Interact.">
        <title>Extending the Bacillus cereus group genomics to putative food-borne pathogens of different toxicity.</title>
        <authorList>
            <person name="Lapidus A."/>
            <person name="Goltsman E."/>
            <person name="Auger S."/>
            <person name="Galleron N."/>
            <person name="Segurens B."/>
            <person name="Dossat C."/>
            <person name="Land M.L."/>
            <person name="Broussolle V."/>
            <person name="Brillard J."/>
            <person name="Guinebretiere M.-H."/>
            <person name="Sanchis V."/>
            <person name="Nguen-the C."/>
            <person name="Lereclus D."/>
            <person name="Richardson P."/>
            <person name="Wincker P."/>
            <person name="Weissenbach J."/>
            <person name="Ehrlich S.D."/>
            <person name="Sorokin A."/>
        </authorList>
    </citation>
    <scope>NUCLEOTIDE SEQUENCE [LARGE SCALE GENOMIC DNA]</scope>
    <source>
        <strain>DSM 22905 / CIP 110041 / 391-98 / NVH 391-98</strain>
    </source>
</reference>
<organism>
    <name type="scientific">Bacillus cytotoxicus (strain DSM 22905 / CIP 110041 / 391-98 / NVH 391-98)</name>
    <dbReference type="NCBI Taxonomy" id="315749"/>
    <lineage>
        <taxon>Bacteria</taxon>
        <taxon>Bacillati</taxon>
        <taxon>Bacillota</taxon>
        <taxon>Bacilli</taxon>
        <taxon>Bacillales</taxon>
        <taxon>Bacillaceae</taxon>
        <taxon>Bacillus</taxon>
        <taxon>Bacillus cereus group</taxon>
    </lineage>
</organism>